<name>MURG_RHOP2</name>
<organism>
    <name type="scientific">Rhodopseudomonas palustris (strain HaA2)</name>
    <dbReference type="NCBI Taxonomy" id="316058"/>
    <lineage>
        <taxon>Bacteria</taxon>
        <taxon>Pseudomonadati</taxon>
        <taxon>Pseudomonadota</taxon>
        <taxon>Alphaproteobacteria</taxon>
        <taxon>Hyphomicrobiales</taxon>
        <taxon>Nitrobacteraceae</taxon>
        <taxon>Rhodopseudomonas</taxon>
    </lineage>
</organism>
<gene>
    <name evidence="1" type="primary">murG</name>
    <name type="ordered locus">RPB_1994</name>
</gene>
<proteinExistence type="inferred from homology"/>
<dbReference type="EC" id="2.4.1.227" evidence="1"/>
<dbReference type="EMBL" id="CP000250">
    <property type="protein sequence ID" value="ABD06702.1"/>
    <property type="molecule type" value="Genomic_DNA"/>
</dbReference>
<dbReference type="RefSeq" id="WP_011440890.1">
    <property type="nucleotide sequence ID" value="NC_007778.1"/>
</dbReference>
<dbReference type="SMR" id="Q2IYK8"/>
<dbReference type="STRING" id="316058.RPB_1994"/>
<dbReference type="CAZy" id="GT28">
    <property type="family name" value="Glycosyltransferase Family 28"/>
</dbReference>
<dbReference type="KEGG" id="rpb:RPB_1994"/>
<dbReference type="eggNOG" id="COG0707">
    <property type="taxonomic scope" value="Bacteria"/>
</dbReference>
<dbReference type="HOGENOM" id="CLU_037404_2_1_5"/>
<dbReference type="OrthoDB" id="9808936at2"/>
<dbReference type="UniPathway" id="UPA00219"/>
<dbReference type="Proteomes" id="UP000008809">
    <property type="component" value="Chromosome"/>
</dbReference>
<dbReference type="GO" id="GO:0005886">
    <property type="term" value="C:plasma membrane"/>
    <property type="evidence" value="ECO:0007669"/>
    <property type="project" value="UniProtKB-SubCell"/>
</dbReference>
<dbReference type="GO" id="GO:0051991">
    <property type="term" value="F:UDP-N-acetyl-D-glucosamine:N-acetylmuramoyl-L-alanyl-D-glutamyl-meso-2,6-diaminopimelyl-D-alanyl-D-alanine-diphosphoundecaprenol 4-beta-N-acetylglucosaminlytransferase activity"/>
    <property type="evidence" value="ECO:0007669"/>
    <property type="project" value="RHEA"/>
</dbReference>
<dbReference type="GO" id="GO:0050511">
    <property type="term" value="F:undecaprenyldiphospho-muramoylpentapeptide beta-N-acetylglucosaminyltransferase activity"/>
    <property type="evidence" value="ECO:0007669"/>
    <property type="project" value="UniProtKB-UniRule"/>
</dbReference>
<dbReference type="GO" id="GO:0005975">
    <property type="term" value="P:carbohydrate metabolic process"/>
    <property type="evidence" value="ECO:0007669"/>
    <property type="project" value="InterPro"/>
</dbReference>
<dbReference type="GO" id="GO:0051301">
    <property type="term" value="P:cell division"/>
    <property type="evidence" value="ECO:0007669"/>
    <property type="project" value="UniProtKB-KW"/>
</dbReference>
<dbReference type="GO" id="GO:0071555">
    <property type="term" value="P:cell wall organization"/>
    <property type="evidence" value="ECO:0007669"/>
    <property type="project" value="UniProtKB-KW"/>
</dbReference>
<dbReference type="GO" id="GO:0030259">
    <property type="term" value="P:lipid glycosylation"/>
    <property type="evidence" value="ECO:0007669"/>
    <property type="project" value="UniProtKB-UniRule"/>
</dbReference>
<dbReference type="GO" id="GO:0009252">
    <property type="term" value="P:peptidoglycan biosynthetic process"/>
    <property type="evidence" value="ECO:0007669"/>
    <property type="project" value="UniProtKB-UniRule"/>
</dbReference>
<dbReference type="GO" id="GO:0008360">
    <property type="term" value="P:regulation of cell shape"/>
    <property type="evidence" value="ECO:0007669"/>
    <property type="project" value="UniProtKB-KW"/>
</dbReference>
<dbReference type="CDD" id="cd03785">
    <property type="entry name" value="GT28_MurG"/>
    <property type="match status" value="1"/>
</dbReference>
<dbReference type="Gene3D" id="3.40.50.2000">
    <property type="entry name" value="Glycogen Phosphorylase B"/>
    <property type="match status" value="2"/>
</dbReference>
<dbReference type="HAMAP" id="MF_00033">
    <property type="entry name" value="MurG"/>
    <property type="match status" value="1"/>
</dbReference>
<dbReference type="InterPro" id="IPR006009">
    <property type="entry name" value="GlcNAc_MurG"/>
</dbReference>
<dbReference type="InterPro" id="IPR007235">
    <property type="entry name" value="Glyco_trans_28_C"/>
</dbReference>
<dbReference type="InterPro" id="IPR004276">
    <property type="entry name" value="GlycoTrans_28_N"/>
</dbReference>
<dbReference type="NCBIfam" id="TIGR01133">
    <property type="entry name" value="murG"/>
    <property type="match status" value="1"/>
</dbReference>
<dbReference type="PANTHER" id="PTHR21015:SF22">
    <property type="entry name" value="GLYCOSYLTRANSFERASE"/>
    <property type="match status" value="1"/>
</dbReference>
<dbReference type="PANTHER" id="PTHR21015">
    <property type="entry name" value="UDP-N-ACETYLGLUCOSAMINE--N-ACETYLMURAMYL-(PENTAPEPTIDE) PYROPHOSPHORYL-UNDECAPRENOL N-ACETYLGLUCOSAMINE TRANSFERASE 1"/>
    <property type="match status" value="1"/>
</dbReference>
<dbReference type="Pfam" id="PF04101">
    <property type="entry name" value="Glyco_tran_28_C"/>
    <property type="match status" value="1"/>
</dbReference>
<dbReference type="Pfam" id="PF03033">
    <property type="entry name" value="Glyco_transf_28"/>
    <property type="match status" value="1"/>
</dbReference>
<dbReference type="SUPFAM" id="SSF53756">
    <property type="entry name" value="UDP-Glycosyltransferase/glycogen phosphorylase"/>
    <property type="match status" value="1"/>
</dbReference>
<evidence type="ECO:0000255" key="1">
    <source>
        <dbReference type="HAMAP-Rule" id="MF_00033"/>
    </source>
</evidence>
<feature type="chain" id="PRO_0000315155" description="UDP-N-acetylglucosamine--N-acetylmuramyl-(pentapeptide) pyrophosphoryl-undecaprenol N-acetylglucosamine transferase">
    <location>
        <begin position="1"/>
        <end position="366"/>
    </location>
</feature>
<feature type="binding site" evidence="1">
    <location>
        <begin position="14"/>
        <end position="16"/>
    </location>
    <ligand>
        <name>UDP-N-acetyl-alpha-D-glucosamine</name>
        <dbReference type="ChEBI" id="CHEBI:57705"/>
    </ligand>
</feature>
<feature type="binding site" evidence="1">
    <location>
        <position position="125"/>
    </location>
    <ligand>
        <name>UDP-N-acetyl-alpha-D-glucosamine</name>
        <dbReference type="ChEBI" id="CHEBI:57705"/>
    </ligand>
</feature>
<feature type="binding site" evidence="1">
    <location>
        <position position="168"/>
    </location>
    <ligand>
        <name>UDP-N-acetyl-alpha-D-glucosamine</name>
        <dbReference type="ChEBI" id="CHEBI:57705"/>
    </ligand>
</feature>
<feature type="binding site" evidence="1">
    <location>
        <position position="196"/>
    </location>
    <ligand>
        <name>UDP-N-acetyl-alpha-D-glucosamine</name>
        <dbReference type="ChEBI" id="CHEBI:57705"/>
    </ligand>
</feature>
<feature type="binding site" evidence="1">
    <location>
        <position position="297"/>
    </location>
    <ligand>
        <name>UDP-N-acetyl-alpha-D-glucosamine</name>
        <dbReference type="ChEBI" id="CHEBI:57705"/>
    </ligand>
</feature>
<keyword id="KW-0131">Cell cycle</keyword>
<keyword id="KW-0132">Cell division</keyword>
<keyword id="KW-0997">Cell inner membrane</keyword>
<keyword id="KW-1003">Cell membrane</keyword>
<keyword id="KW-0133">Cell shape</keyword>
<keyword id="KW-0961">Cell wall biogenesis/degradation</keyword>
<keyword id="KW-0328">Glycosyltransferase</keyword>
<keyword id="KW-0472">Membrane</keyword>
<keyword id="KW-0573">Peptidoglycan synthesis</keyword>
<keyword id="KW-1185">Reference proteome</keyword>
<keyword id="KW-0808">Transferase</keyword>
<accession>Q2IYK8</accession>
<reference key="1">
    <citation type="submission" date="2006-01" db="EMBL/GenBank/DDBJ databases">
        <title>Complete sequence of Rhodopseudomonas palustris HaA2.</title>
        <authorList>
            <consortium name="US DOE Joint Genome Institute"/>
            <person name="Copeland A."/>
            <person name="Lucas S."/>
            <person name="Lapidus A."/>
            <person name="Barry K."/>
            <person name="Detter J.C."/>
            <person name="Glavina T."/>
            <person name="Hammon N."/>
            <person name="Israni S."/>
            <person name="Pitluck S."/>
            <person name="Chain P."/>
            <person name="Malfatti S."/>
            <person name="Shin M."/>
            <person name="Vergez L."/>
            <person name="Schmutz J."/>
            <person name="Larimer F."/>
            <person name="Land M."/>
            <person name="Hauser L."/>
            <person name="Pelletier D.A."/>
            <person name="Kyrpides N."/>
            <person name="Anderson I."/>
            <person name="Oda Y."/>
            <person name="Harwood C.S."/>
            <person name="Richardson P."/>
        </authorList>
    </citation>
    <scope>NUCLEOTIDE SEQUENCE [LARGE SCALE GENOMIC DNA]</scope>
    <source>
        <strain>HaA2</strain>
    </source>
</reference>
<comment type="function">
    <text evidence="1">Cell wall formation. Catalyzes the transfer of a GlcNAc subunit on undecaprenyl-pyrophosphoryl-MurNAc-pentapeptide (lipid intermediate I) to form undecaprenyl-pyrophosphoryl-MurNAc-(pentapeptide)GlcNAc (lipid intermediate II).</text>
</comment>
<comment type="catalytic activity">
    <reaction evidence="1">
        <text>di-trans,octa-cis-undecaprenyl diphospho-N-acetyl-alpha-D-muramoyl-L-alanyl-D-glutamyl-meso-2,6-diaminopimeloyl-D-alanyl-D-alanine + UDP-N-acetyl-alpha-D-glucosamine = di-trans,octa-cis-undecaprenyl diphospho-[N-acetyl-alpha-D-glucosaminyl-(1-&gt;4)]-N-acetyl-alpha-D-muramoyl-L-alanyl-D-glutamyl-meso-2,6-diaminopimeloyl-D-alanyl-D-alanine + UDP + H(+)</text>
        <dbReference type="Rhea" id="RHEA:31227"/>
        <dbReference type="ChEBI" id="CHEBI:15378"/>
        <dbReference type="ChEBI" id="CHEBI:57705"/>
        <dbReference type="ChEBI" id="CHEBI:58223"/>
        <dbReference type="ChEBI" id="CHEBI:61387"/>
        <dbReference type="ChEBI" id="CHEBI:61388"/>
        <dbReference type="EC" id="2.4.1.227"/>
    </reaction>
</comment>
<comment type="pathway">
    <text evidence="1">Cell wall biogenesis; peptidoglycan biosynthesis.</text>
</comment>
<comment type="subcellular location">
    <subcellularLocation>
        <location evidence="1">Cell inner membrane</location>
        <topology evidence="1">Peripheral membrane protein</topology>
        <orientation evidence="1">Cytoplasmic side</orientation>
    </subcellularLocation>
</comment>
<comment type="similarity">
    <text evidence="1">Belongs to the glycosyltransferase 28 family. MurG subfamily.</text>
</comment>
<sequence length="366" mass="38025">MSDAPLILLAAGGTGGHLFPAEALGVVLMKRGLRVRLVTDSRAMRYSGLFSADMIDVVPSETVRGRTPWALARTGLMLGAGTAKALALMLRLKPAAVVGFGGYPTLPPLFAARALRIPTLIHDSNAVMGRANRLLSKGVTAIATSLPGVLDRDPTLSAKTTTTGTPMRPAILAAAAVPFAPLAAEGPLRLLVVGGSQGARVMADIVPGAIEQLDPALQPRLVLTQQVREEDMARVRAVYDRLKITCELAPFFNDLPARLAASQLVVSRSGAGTVAELAAIGRPSILVPLPGALDQDQFANAGVLADAGGAIRIVQADFTPERLADEIAALAADPQKLTAMVTAARTVGRLDAADRLADLVVKVANI</sequence>
<protein>
    <recommendedName>
        <fullName evidence="1">UDP-N-acetylglucosamine--N-acetylmuramyl-(pentapeptide) pyrophosphoryl-undecaprenol N-acetylglucosamine transferase</fullName>
        <ecNumber evidence="1">2.4.1.227</ecNumber>
    </recommendedName>
    <alternativeName>
        <fullName evidence="1">Undecaprenyl-PP-MurNAc-pentapeptide-UDPGlcNAc GlcNAc transferase</fullName>
    </alternativeName>
</protein>